<comment type="function">
    <text evidence="6 7 8">Facilitates the interaction of SYP31 and CDC48A, thereby regulating an CDC48A membrane-associated function (Ref.8). Appears to act as a negative regulator mediating the powdery mildew-plant interaction (PubMed:19176722, PubMed:23301616).</text>
</comment>
<comment type="subunit">
    <text evidence="8">Interacts with CDC48A in vitro and co-fractionates with membrane-associated but not soluble CDC48A in vivo.</text>
</comment>
<comment type="subcellular location">
    <subcellularLocation>
        <location>Membrane</location>
        <topology evidence="8">Peripheral membrane protein</topology>
    </subcellularLocation>
</comment>
<comment type="induction">
    <text evidence="6">Induced in response to powdery mildew and by benzothiadiazole (BTH) treatment.</text>
</comment>
<comment type="domain">
    <text evidence="5 8">PUB (PUG) domain is required for the interaction with CDC48A (Ref.8). PUB domain may serve as a protein-protein interaction domain implicated in the ubiquitin-proteasome pathway (PubMed:11587532).</text>
</comment>
<comment type="disruption phenotype">
    <text evidence="6 7">Enhanced resistance to powdery mildew with a reduced fungus reproduction.</text>
</comment>
<keyword id="KW-0472">Membrane</keyword>
<keyword id="KW-0479">Metal-binding</keyword>
<keyword id="KW-1185">Reference proteome</keyword>
<keyword id="KW-0833">Ubl conjugation pathway</keyword>
<keyword id="KW-0862">Zinc</keyword>
<keyword id="KW-0863">Zinc-finger</keyword>
<reference key="1">
    <citation type="journal article" date="2004" name="J. Biol. Chem.">
        <title>Plant UBX domain-containing protein 1, PUX1, regulates the oligomeric structure and activity of arabidopsis CDC48.</title>
        <authorList>
            <person name="Rancour D.M."/>
            <person name="Park S."/>
            <person name="Knight S.D."/>
            <person name="Bednarek S.Y."/>
        </authorList>
    </citation>
    <scope>NUCLEOTIDE SEQUENCE [MRNA]</scope>
    <source>
        <strain>cv. Columbia</strain>
    </source>
</reference>
<reference key="2">
    <citation type="journal article" date="1999" name="Nature">
        <title>Sequence and analysis of chromosome 2 of the plant Arabidopsis thaliana.</title>
        <authorList>
            <person name="Lin X."/>
            <person name="Kaul S."/>
            <person name="Rounsley S.D."/>
            <person name="Shea T.P."/>
            <person name="Benito M.-I."/>
            <person name="Town C.D."/>
            <person name="Fujii C.Y."/>
            <person name="Mason T.M."/>
            <person name="Bowman C.L."/>
            <person name="Barnstead M.E."/>
            <person name="Feldblyum T.V."/>
            <person name="Buell C.R."/>
            <person name="Ketchum K.A."/>
            <person name="Lee J.J."/>
            <person name="Ronning C.M."/>
            <person name="Koo H.L."/>
            <person name="Moffat K.S."/>
            <person name="Cronin L.A."/>
            <person name="Shen M."/>
            <person name="Pai G."/>
            <person name="Van Aken S."/>
            <person name="Umayam L."/>
            <person name="Tallon L.J."/>
            <person name="Gill J.E."/>
            <person name="Adams M.D."/>
            <person name="Carrera A.J."/>
            <person name="Creasy T.H."/>
            <person name="Goodman H.M."/>
            <person name="Somerville C.R."/>
            <person name="Copenhaver G.P."/>
            <person name="Preuss D."/>
            <person name="Nierman W.C."/>
            <person name="White O."/>
            <person name="Eisen J.A."/>
            <person name="Salzberg S.L."/>
            <person name="Fraser C.M."/>
            <person name="Venter J.C."/>
        </authorList>
    </citation>
    <scope>NUCLEOTIDE SEQUENCE [LARGE SCALE GENOMIC DNA]</scope>
    <source>
        <strain>cv. Columbia</strain>
    </source>
</reference>
<reference key="3">
    <citation type="journal article" date="2017" name="Plant J.">
        <title>Araport11: a complete reannotation of the Arabidopsis thaliana reference genome.</title>
        <authorList>
            <person name="Cheng C.Y."/>
            <person name="Krishnakumar V."/>
            <person name="Chan A.P."/>
            <person name="Thibaud-Nissen F."/>
            <person name="Schobel S."/>
            <person name="Town C.D."/>
        </authorList>
    </citation>
    <scope>GENOME REANNOTATION</scope>
    <source>
        <strain>cv. Columbia</strain>
    </source>
</reference>
<reference key="4">
    <citation type="journal article" date="2002" name="Science">
        <title>Functional annotation of a full-length Arabidopsis cDNA collection.</title>
        <authorList>
            <person name="Seki M."/>
            <person name="Narusaka M."/>
            <person name="Kamiya A."/>
            <person name="Ishida J."/>
            <person name="Satou M."/>
            <person name="Sakurai T."/>
            <person name="Nakajima M."/>
            <person name="Enju A."/>
            <person name="Akiyama K."/>
            <person name="Oono Y."/>
            <person name="Muramatsu M."/>
            <person name="Hayashizaki Y."/>
            <person name="Kawai J."/>
            <person name="Carninci P."/>
            <person name="Itoh M."/>
            <person name="Ishii Y."/>
            <person name="Arakawa T."/>
            <person name="Shibata K."/>
            <person name="Shinagawa A."/>
            <person name="Shinozaki K."/>
        </authorList>
    </citation>
    <scope>NUCLEOTIDE SEQUENCE [LARGE SCALE MRNA]</scope>
    <source>
        <strain>cv. Columbia</strain>
    </source>
</reference>
<reference key="5">
    <citation type="journal article" date="2003" name="Science">
        <title>Empirical analysis of transcriptional activity in the Arabidopsis genome.</title>
        <authorList>
            <person name="Yamada K."/>
            <person name="Lim J."/>
            <person name="Dale J.M."/>
            <person name="Chen H."/>
            <person name="Shinn P."/>
            <person name="Palm C.J."/>
            <person name="Southwick A.M."/>
            <person name="Wu H.C."/>
            <person name="Kim C.J."/>
            <person name="Nguyen M."/>
            <person name="Pham P.K."/>
            <person name="Cheuk R.F."/>
            <person name="Karlin-Newmann G."/>
            <person name="Liu S.X."/>
            <person name="Lam B."/>
            <person name="Sakano H."/>
            <person name="Wu T."/>
            <person name="Yu G."/>
            <person name="Miranda M."/>
            <person name="Quach H.L."/>
            <person name="Tripp M."/>
            <person name="Chang C.H."/>
            <person name="Lee J.M."/>
            <person name="Toriumi M.J."/>
            <person name="Chan M.M."/>
            <person name="Tang C.C."/>
            <person name="Onodera C.S."/>
            <person name="Deng J.M."/>
            <person name="Akiyama K."/>
            <person name="Ansari Y."/>
            <person name="Arakawa T."/>
            <person name="Banh J."/>
            <person name="Banno F."/>
            <person name="Bowser L."/>
            <person name="Brooks S.Y."/>
            <person name="Carninci P."/>
            <person name="Chao Q."/>
            <person name="Choy N."/>
            <person name="Enju A."/>
            <person name="Goldsmith A.D."/>
            <person name="Gurjal M."/>
            <person name="Hansen N.F."/>
            <person name="Hayashizaki Y."/>
            <person name="Johnson-Hopson C."/>
            <person name="Hsuan V.W."/>
            <person name="Iida K."/>
            <person name="Karnes M."/>
            <person name="Khan S."/>
            <person name="Koesema E."/>
            <person name="Ishida J."/>
            <person name="Jiang P.X."/>
            <person name="Jones T."/>
            <person name="Kawai J."/>
            <person name="Kamiya A."/>
            <person name="Meyers C."/>
            <person name="Nakajima M."/>
            <person name="Narusaka M."/>
            <person name="Seki M."/>
            <person name="Sakurai T."/>
            <person name="Satou M."/>
            <person name="Tamse R."/>
            <person name="Vaysberg M."/>
            <person name="Wallender E.K."/>
            <person name="Wong C."/>
            <person name="Yamamura Y."/>
            <person name="Yuan S."/>
            <person name="Shinozaki K."/>
            <person name="Davis R.W."/>
            <person name="Theologis A."/>
            <person name="Ecker J.R."/>
        </authorList>
    </citation>
    <scope>NUCLEOTIDE SEQUENCE [LARGE SCALE MRNA]</scope>
    <source>
        <strain>cv. Columbia</strain>
    </source>
</reference>
<reference key="6">
    <citation type="submission" date="2002-03" db="EMBL/GenBank/DDBJ databases">
        <title>Full-length cDNA from Arabidopsis thaliana.</title>
        <authorList>
            <person name="Brover V.V."/>
            <person name="Troukhan M.E."/>
            <person name="Alexandrov N.A."/>
            <person name="Lu Y.-P."/>
            <person name="Flavell R.B."/>
            <person name="Feldmann K.A."/>
        </authorList>
    </citation>
    <scope>NUCLEOTIDE SEQUENCE [LARGE SCALE MRNA]</scope>
</reference>
<reference key="7">
    <citation type="journal article" date="2001" name="Biochem. Biophys. Res. Commun.">
        <title>The PUB domain: a putative protein-protein interaction domain implicated in the ubiquitin-proteasome pathway.</title>
        <authorList>
            <person name="Suzuki T."/>
            <person name="Park H."/>
            <person name="Till E.A."/>
            <person name="Lennarz W.J."/>
        </authorList>
    </citation>
    <scope>PUB DOMAIN</scope>
</reference>
<reference key="8">
    <citation type="book" date="2005" name="Proceedings of the 16th international conference on Arabidopsis research">
        <title>The plant UBX-domain containing (PUX) protein family regulates the function of Arabidopsis CDC48, a conserved essential AAA-ATPase.</title>
        <authorList>
            <person name="Posthuma R."/>
            <person name="Rancour D."/>
            <person name="Park S."/>
            <person name="Bates B."/>
            <person name="Bednarek S."/>
        </authorList>
    </citation>
    <scope>GENE FAMILY</scope>
    <scope>SUBCELLULAR LOCATION</scope>
    <scope>INTERACTION WITH CDC48A</scope>
    <scope>FUNCTION</scope>
    <scope>PUB DOMAIN</scope>
</reference>
<reference key="9">
    <citation type="journal article" date="2009" name="Plant Physiol.">
        <title>Temporal global expression data reveal known and novel salicylate-impacted processes and regulators mediating powdery mildew growth and reproduction on Arabidopsis.</title>
        <authorList>
            <person name="Chandran D."/>
            <person name="Tai Y.C."/>
            <person name="Hather G."/>
            <person name="Dewdney J."/>
            <person name="Denoux C."/>
            <person name="Burgess D.G."/>
            <person name="Ausubel F.M."/>
            <person name="Speed T.P."/>
            <person name="Wildermuth M.C."/>
        </authorList>
    </citation>
    <scope>DISRUPTION PHENOTYPE</scope>
    <scope>INDUCTION</scope>
    <scope>FUNCTION</scope>
</reference>
<reference key="10">
    <citation type="journal article" date="2013" name="Mol. Plant Microbe Interact.">
        <title>Host cell ploidy underlying the fungal feeding site is a determinant of powdery mildew growth and reproduction.</title>
        <authorList>
            <person name="Chandran D."/>
            <person name="Rickert J."/>
            <person name="Cherk C."/>
            <person name="Dotson B.R."/>
            <person name="Wildermuth M.C."/>
        </authorList>
    </citation>
    <scope>DISRUPTION PHENOTYPE</scope>
    <scope>FUNCTION</scope>
</reference>
<evidence type="ECO:0000255" key="1"/>
<evidence type="ECO:0000255" key="2">
    <source>
        <dbReference type="PROSITE-ProRule" id="PRU00042"/>
    </source>
</evidence>
<evidence type="ECO:0000255" key="3">
    <source>
        <dbReference type="PROSITE-ProRule" id="PRU00215"/>
    </source>
</evidence>
<evidence type="ECO:0000256" key="4">
    <source>
        <dbReference type="SAM" id="MobiDB-lite"/>
    </source>
</evidence>
<evidence type="ECO:0000269" key="5">
    <source>
    </source>
</evidence>
<evidence type="ECO:0000269" key="6">
    <source>
    </source>
</evidence>
<evidence type="ECO:0000269" key="7">
    <source>
    </source>
</evidence>
<evidence type="ECO:0000269" key="8">
    <source ref="8"/>
</evidence>
<evidence type="ECO:0000303" key="9">
    <source>
    </source>
</evidence>
<evidence type="ECO:0000303" key="10">
    <source ref="8"/>
</evidence>
<evidence type="ECO:0000312" key="11">
    <source>
        <dbReference type="Araport" id="AT2G01650"/>
    </source>
</evidence>
<evidence type="ECO:0000312" key="12">
    <source>
        <dbReference type="EMBL" id="AAD12706.2"/>
    </source>
</evidence>
<evidence type="ECO:0000312" key="13">
    <source>
        <dbReference type="EMBL" id="AAS78924.1"/>
    </source>
</evidence>
<dbReference type="EMBL" id="AY572782">
    <property type="protein sequence ID" value="AAS78924.1"/>
    <property type="molecule type" value="mRNA"/>
</dbReference>
<dbReference type="EMBL" id="AC006069">
    <property type="protein sequence ID" value="AAD12706.2"/>
    <property type="molecule type" value="Genomic_DNA"/>
</dbReference>
<dbReference type="EMBL" id="CP002685">
    <property type="protein sequence ID" value="AEC05479.1"/>
    <property type="molecule type" value="Genomic_DNA"/>
</dbReference>
<dbReference type="EMBL" id="CP002685">
    <property type="protein sequence ID" value="ANM61337.1"/>
    <property type="molecule type" value="Genomic_DNA"/>
</dbReference>
<dbReference type="EMBL" id="AK118911">
    <property type="protein sequence ID" value="BAC43494.1"/>
    <property type="molecule type" value="mRNA"/>
</dbReference>
<dbReference type="EMBL" id="BT005408">
    <property type="protein sequence ID" value="AAO63828.1"/>
    <property type="molecule type" value="mRNA"/>
</dbReference>
<dbReference type="EMBL" id="AY084317">
    <property type="protein sequence ID" value="AAM60904.1"/>
    <property type="molecule type" value="mRNA"/>
</dbReference>
<dbReference type="PIR" id="D84427">
    <property type="entry name" value="D84427"/>
</dbReference>
<dbReference type="RefSeq" id="NP_001318177.1">
    <property type="nucleotide sequence ID" value="NM_001335070.1"/>
</dbReference>
<dbReference type="RefSeq" id="NP_565271.1">
    <property type="nucleotide sequence ID" value="NM_126226.4"/>
</dbReference>
<dbReference type="SMR" id="Q9ZU93"/>
<dbReference type="FunCoup" id="Q9ZU93">
    <property type="interactions" value="3006"/>
</dbReference>
<dbReference type="IntAct" id="Q9ZU93">
    <property type="interactions" value="2"/>
</dbReference>
<dbReference type="STRING" id="3702.Q9ZU93"/>
<dbReference type="TCDB" id="3.A.16.1.5">
    <property type="family name" value="the endoplasmic reticular retrotranslocon (er-rt) family"/>
</dbReference>
<dbReference type="iPTMnet" id="Q9ZU93"/>
<dbReference type="PaxDb" id="3702-AT2G01650.1"/>
<dbReference type="ProteomicsDB" id="225933"/>
<dbReference type="EnsemblPlants" id="AT2G01650.1">
    <property type="protein sequence ID" value="AT2G01650.1"/>
    <property type="gene ID" value="AT2G01650"/>
</dbReference>
<dbReference type="EnsemblPlants" id="AT2G01650.2">
    <property type="protein sequence ID" value="AT2G01650.2"/>
    <property type="gene ID" value="AT2G01650"/>
</dbReference>
<dbReference type="GeneID" id="814694"/>
<dbReference type="Gramene" id="AT2G01650.1">
    <property type="protein sequence ID" value="AT2G01650.1"/>
    <property type="gene ID" value="AT2G01650"/>
</dbReference>
<dbReference type="Gramene" id="AT2G01650.2">
    <property type="protein sequence ID" value="AT2G01650.2"/>
    <property type="gene ID" value="AT2G01650"/>
</dbReference>
<dbReference type="KEGG" id="ath:AT2G01650"/>
<dbReference type="Araport" id="AT2G01650"/>
<dbReference type="TAIR" id="AT2G01650">
    <property type="gene designation" value="PUX2"/>
</dbReference>
<dbReference type="eggNOG" id="KOG2699">
    <property type="taxonomic scope" value="Eukaryota"/>
</dbReference>
<dbReference type="HOGENOM" id="CLU_610277_0_0_1"/>
<dbReference type="InParanoid" id="Q9ZU93"/>
<dbReference type="OMA" id="GEMWAMM"/>
<dbReference type="PhylomeDB" id="Q9ZU93"/>
<dbReference type="PRO" id="PR:Q9ZU93"/>
<dbReference type="Proteomes" id="UP000006548">
    <property type="component" value="Chromosome 2"/>
</dbReference>
<dbReference type="ExpressionAtlas" id="Q9ZU93">
    <property type="expression patterns" value="baseline and differential"/>
</dbReference>
<dbReference type="GO" id="GO:0016020">
    <property type="term" value="C:membrane"/>
    <property type="evidence" value="ECO:0007669"/>
    <property type="project" value="UniProtKB-SubCell"/>
</dbReference>
<dbReference type="GO" id="GO:0005739">
    <property type="term" value="C:mitochondrion"/>
    <property type="evidence" value="ECO:0007005"/>
    <property type="project" value="TAIR"/>
</dbReference>
<dbReference type="GO" id="GO:0008270">
    <property type="term" value="F:zinc ion binding"/>
    <property type="evidence" value="ECO:0007669"/>
    <property type="project" value="UniProtKB-KW"/>
</dbReference>
<dbReference type="GO" id="GO:0050832">
    <property type="term" value="P:defense response to fungus"/>
    <property type="evidence" value="ECO:0000315"/>
    <property type="project" value="UniProtKB"/>
</dbReference>
<dbReference type="GO" id="GO:0009620">
    <property type="term" value="P:response to fungus"/>
    <property type="evidence" value="ECO:0000270"/>
    <property type="project" value="UniProtKB"/>
</dbReference>
<dbReference type="CDD" id="cd09212">
    <property type="entry name" value="PUB"/>
    <property type="match status" value="1"/>
</dbReference>
<dbReference type="CDD" id="cd16119">
    <property type="entry name" value="UBX_UBXN6"/>
    <property type="match status" value="1"/>
</dbReference>
<dbReference type="FunFam" id="3.10.20.90:FF:000185">
    <property type="entry name" value="UBX domain-containing protein 6"/>
    <property type="match status" value="1"/>
</dbReference>
<dbReference type="Gene3D" id="1.20.58.2190">
    <property type="match status" value="1"/>
</dbReference>
<dbReference type="Gene3D" id="3.10.20.90">
    <property type="entry name" value="Phosphatidylinositol 3-kinase Catalytic Subunit, Chain A, domain 1"/>
    <property type="match status" value="1"/>
</dbReference>
<dbReference type="InterPro" id="IPR036339">
    <property type="entry name" value="PUB-like_dom_sf"/>
</dbReference>
<dbReference type="InterPro" id="IPR018997">
    <property type="entry name" value="PUB_domain"/>
</dbReference>
<dbReference type="InterPro" id="IPR029071">
    <property type="entry name" value="Ubiquitin-like_domsf"/>
</dbReference>
<dbReference type="InterPro" id="IPR001012">
    <property type="entry name" value="UBX_dom"/>
</dbReference>
<dbReference type="PANTHER" id="PTHR47694">
    <property type="entry name" value="PLANT UBX DOMAIN-CONTAINING PROTEIN 2"/>
    <property type="match status" value="1"/>
</dbReference>
<dbReference type="PANTHER" id="PTHR47694:SF1">
    <property type="entry name" value="PLANT UBX DOMAIN-CONTAINING PROTEIN 2"/>
    <property type="match status" value="1"/>
</dbReference>
<dbReference type="Pfam" id="PF09409">
    <property type="entry name" value="PUB"/>
    <property type="match status" value="1"/>
</dbReference>
<dbReference type="SMART" id="SM00580">
    <property type="entry name" value="PUG"/>
    <property type="match status" value="1"/>
</dbReference>
<dbReference type="SUPFAM" id="SSF143503">
    <property type="entry name" value="PUG domain-like"/>
    <property type="match status" value="1"/>
</dbReference>
<dbReference type="SUPFAM" id="SSF54236">
    <property type="entry name" value="Ubiquitin-like"/>
    <property type="match status" value="1"/>
</dbReference>
<dbReference type="PROSITE" id="PS50033">
    <property type="entry name" value="UBX"/>
    <property type="match status" value="1"/>
</dbReference>
<accession>Q9ZU93</accession>
<accession>Q8LGE5</accession>
<proteinExistence type="evidence at protein level"/>
<organism>
    <name type="scientific">Arabidopsis thaliana</name>
    <name type="common">Mouse-ear cress</name>
    <dbReference type="NCBI Taxonomy" id="3702"/>
    <lineage>
        <taxon>Eukaryota</taxon>
        <taxon>Viridiplantae</taxon>
        <taxon>Streptophyta</taxon>
        <taxon>Embryophyta</taxon>
        <taxon>Tracheophyta</taxon>
        <taxon>Spermatophyta</taxon>
        <taxon>Magnoliopsida</taxon>
        <taxon>eudicotyledons</taxon>
        <taxon>Gunneridae</taxon>
        <taxon>Pentapetalae</taxon>
        <taxon>rosids</taxon>
        <taxon>malvids</taxon>
        <taxon>Brassicales</taxon>
        <taxon>Brassicaceae</taxon>
        <taxon>Camelineae</taxon>
        <taxon>Arabidopsis</taxon>
    </lineage>
</organism>
<name>PUX2_ARATH</name>
<protein>
    <recommendedName>
        <fullName evidence="10">Plant UBX domain-containing protein 2</fullName>
        <shortName evidence="10">PUX2</shortName>
    </recommendedName>
    <alternativeName>
        <fullName evidence="9">AtPUB3</fullName>
    </alternativeName>
    <alternativeName>
        <fullName evidence="13">CDC48-interacting UBX-domain protein 2</fullName>
    </alternativeName>
</protein>
<feature type="chain" id="PRO_0000432601" description="Plant UBX domain-containing protein 2">
    <location>
        <begin position="1"/>
        <end position="458"/>
    </location>
</feature>
<feature type="domain" description="PUB" evidence="1">
    <location>
        <begin position="181"/>
        <end position="248"/>
    </location>
</feature>
<feature type="domain" description="UBX" evidence="3">
    <location>
        <begin position="349"/>
        <end position="433"/>
    </location>
</feature>
<feature type="zinc finger region" description="C2H2-type; atypical" evidence="2">
    <location>
        <begin position="121"/>
        <end position="143"/>
    </location>
</feature>
<feature type="region of interest" description="Disordered" evidence="4">
    <location>
        <begin position="1"/>
        <end position="103"/>
    </location>
</feature>
<feature type="compositionally biased region" description="Polar residues" evidence="4">
    <location>
        <begin position="44"/>
        <end position="54"/>
    </location>
</feature>
<feature type="compositionally biased region" description="Pro residues" evidence="4">
    <location>
        <begin position="56"/>
        <end position="70"/>
    </location>
</feature>
<feature type="compositionally biased region" description="Polar residues" evidence="4">
    <location>
        <begin position="74"/>
        <end position="85"/>
    </location>
</feature>
<gene>
    <name evidence="13" type="primary">PUX2</name>
    <name evidence="9" type="synonym">PUB3</name>
    <name evidence="11" type="ordered locus">At2g01650</name>
    <name evidence="12" type="ORF">T8O11.18</name>
</gene>
<sequence>MDDVKDKLKGFMKKVNLSSSSGKFKGQGRVLGSSSSSSAPPVNPIQNRFNSSQAPNPTPRPKPNPNPLPEKPLSSSDQKISGSTRNPDHDPVRAPQDGFDPYGAFITSSNRSQNGYSLSMFECPICKNPFTSEEEVSVHVESCLGDTNGDESSFEKDNNDNDKSEMEKLVVVYLSGKPSESSIDVLLRLFKNIVKEPENAKFRKVRMSNAKIKEAIGDVAGGVELLELVGFELKEENDEIWAVMDVPSEEQSILINKVVGYLEKRKTESSGSSAQVMEPVAPKKIDREIRVFFSVSENVASRIEVPDSFYSLSADEIKREADLRRKKIAESQLLIPRSYKEKQAKAARKRYKRSMIRVQFPDGVVLQGVFAPWEPTFALYEFVSSALKEPSLQFELLDPVLVKRRVIPHTPAPGQKPITLEDEELVPSALIRFRPIETDSLVFTGLRNELLEISEPLS</sequence>